<gene>
    <name type="primary">ppiB</name>
    <name type="synonym">ppi</name>
    <name type="ordered locus">TP_0947</name>
</gene>
<name>PPIB_TREPA</name>
<feature type="chain" id="PRO_0000064213" description="Probable peptidyl-prolyl cis-trans isomerase">
    <location>
        <begin position="1"/>
        <end position="215"/>
    </location>
</feature>
<feature type="domain" description="PPIase cyclophilin-type" evidence="2">
    <location>
        <begin position="38"/>
        <end position="197"/>
    </location>
</feature>
<accession>O66105</accession>
<protein>
    <recommendedName>
        <fullName>Probable peptidyl-prolyl cis-trans isomerase</fullName>
        <shortName>PPIase</shortName>
        <ecNumber>5.2.1.8</ecNumber>
    </recommendedName>
    <alternativeName>
        <fullName>Rotamase</fullName>
    </alternativeName>
</protein>
<reference key="1">
    <citation type="journal article" date="1997" name="Infect. Immun.">
        <title>Identification of homologs for thioredoxin, peptidyl prolyl cis-trans isomerase, and glycerophosphodiester phosphodiesterase in outer membrane fractions from Treponema pallidum, the syphilis spirochete.</title>
        <authorList>
            <person name="Shevchenko D.V."/>
            <person name="Akins D.R."/>
            <person name="Robinson E.J."/>
            <person name="Li M."/>
            <person name="Shevchenko O.V."/>
            <person name="Radolf J.D."/>
        </authorList>
    </citation>
    <scope>NUCLEOTIDE SEQUENCE [GENOMIC DNA]</scope>
    <scope>PARTIAL PROTEIN SEQUENCE</scope>
</reference>
<reference key="2">
    <citation type="journal article" date="1998" name="Science">
        <title>Complete genome sequence of Treponema pallidum, the syphilis spirochete.</title>
        <authorList>
            <person name="Fraser C.M."/>
            <person name="Norris S.J."/>
            <person name="Weinstock G.M."/>
            <person name="White O."/>
            <person name="Sutton G.G."/>
            <person name="Dodson R.J."/>
            <person name="Gwinn M.L."/>
            <person name="Hickey E.K."/>
            <person name="Clayton R.A."/>
            <person name="Ketchum K.A."/>
            <person name="Sodergren E."/>
            <person name="Hardham J.M."/>
            <person name="McLeod M.P."/>
            <person name="Salzberg S.L."/>
            <person name="Peterson J.D."/>
            <person name="Khalak H.G."/>
            <person name="Richardson D.L."/>
            <person name="Howell J.K."/>
            <person name="Chidambaram M."/>
            <person name="Utterback T.R."/>
            <person name="McDonald L.A."/>
            <person name="Artiach P."/>
            <person name="Bowman C."/>
            <person name="Cotton M.D."/>
            <person name="Fujii C."/>
            <person name="Garland S.A."/>
            <person name="Hatch B."/>
            <person name="Horst K."/>
            <person name="Roberts K.M."/>
            <person name="Sandusky M."/>
            <person name="Weidman J.F."/>
            <person name="Smith H.O."/>
            <person name="Venter J.C."/>
        </authorList>
    </citation>
    <scope>NUCLEOTIDE SEQUENCE [LARGE SCALE GENOMIC DNA]</scope>
    <source>
        <strain>Nichols</strain>
    </source>
</reference>
<proteinExistence type="evidence at protein level"/>
<comment type="function">
    <text evidence="1">PPIases accelerate the folding of proteins. It catalyzes the cis-trans isomerization of proline imidic peptide bonds in oligopeptides (By similarity).</text>
</comment>
<comment type="catalytic activity">
    <reaction>
        <text>[protein]-peptidylproline (omega=180) = [protein]-peptidylproline (omega=0)</text>
        <dbReference type="Rhea" id="RHEA:16237"/>
        <dbReference type="Rhea" id="RHEA-COMP:10747"/>
        <dbReference type="Rhea" id="RHEA-COMP:10748"/>
        <dbReference type="ChEBI" id="CHEBI:83833"/>
        <dbReference type="ChEBI" id="CHEBI:83834"/>
        <dbReference type="EC" id="5.2.1.8"/>
    </reaction>
</comment>
<comment type="similarity">
    <text evidence="3">Belongs to the cyclophilin-type PPIase family.</text>
</comment>
<sequence length="215" mass="23272">MNTQVWRVCVGVMLFCFVGRIGCAEEKMVREEGLAVADGIYAVMETNRGTIVLSLFFEKAPLTVCNFVGLAEGTLAVCKGRPFYQGLTFHRVIKDFMIQGGDPQGNGTGGPGYQFPDECDPALRHDSPGVLSMANAGPGTNGSQFFITHVATPWLDGKHTVFGKVVEGMEVVHAIIAGDTIRSLKIVRRGAAAKRFVCDQAQFDQLRKRVSAASK</sequence>
<keyword id="KW-0903">Direct protein sequencing</keyword>
<keyword id="KW-0413">Isomerase</keyword>
<keyword id="KW-1185">Reference proteome</keyword>
<keyword id="KW-0697">Rotamase</keyword>
<evidence type="ECO:0000250" key="1"/>
<evidence type="ECO:0000255" key="2">
    <source>
        <dbReference type="PROSITE-ProRule" id="PRU00156"/>
    </source>
</evidence>
<evidence type="ECO:0000305" key="3"/>
<organism>
    <name type="scientific">Treponema pallidum (strain Nichols)</name>
    <dbReference type="NCBI Taxonomy" id="243276"/>
    <lineage>
        <taxon>Bacteria</taxon>
        <taxon>Pseudomonadati</taxon>
        <taxon>Spirochaetota</taxon>
        <taxon>Spirochaetia</taxon>
        <taxon>Spirochaetales</taxon>
        <taxon>Treponemataceae</taxon>
        <taxon>Treponema</taxon>
    </lineage>
</organism>
<dbReference type="EC" id="5.2.1.8"/>
<dbReference type="EMBL" id="U97573">
    <property type="protein sequence ID" value="AAC08055.1"/>
    <property type="molecule type" value="Genomic_DNA"/>
</dbReference>
<dbReference type="EMBL" id="AE000520">
    <property type="protein sequence ID" value="AAC65904.1"/>
    <property type="molecule type" value="Genomic_DNA"/>
</dbReference>
<dbReference type="PIR" id="A71261">
    <property type="entry name" value="A71261"/>
</dbReference>
<dbReference type="RefSeq" id="WP_010882390.1">
    <property type="nucleotide sequence ID" value="NC_021490.2"/>
</dbReference>
<dbReference type="SMR" id="O66105"/>
<dbReference type="IntAct" id="O66105">
    <property type="interactions" value="14"/>
</dbReference>
<dbReference type="STRING" id="243276.TP_0947"/>
<dbReference type="EnsemblBacteria" id="AAC65904">
    <property type="protein sequence ID" value="AAC65904"/>
    <property type="gene ID" value="TP_0947"/>
</dbReference>
<dbReference type="KEGG" id="tpa:TP_0947"/>
<dbReference type="KEGG" id="tpw:TPANIC_0947"/>
<dbReference type="eggNOG" id="COG0652">
    <property type="taxonomic scope" value="Bacteria"/>
</dbReference>
<dbReference type="HOGENOM" id="CLU_012062_16_4_12"/>
<dbReference type="OrthoDB" id="9807797at2"/>
<dbReference type="Proteomes" id="UP000000811">
    <property type="component" value="Chromosome"/>
</dbReference>
<dbReference type="GO" id="GO:0003755">
    <property type="term" value="F:peptidyl-prolyl cis-trans isomerase activity"/>
    <property type="evidence" value="ECO:0007669"/>
    <property type="project" value="UniProtKB-KW"/>
</dbReference>
<dbReference type="GO" id="GO:0006457">
    <property type="term" value="P:protein folding"/>
    <property type="evidence" value="ECO:0007669"/>
    <property type="project" value="InterPro"/>
</dbReference>
<dbReference type="CDD" id="cd00317">
    <property type="entry name" value="cyclophilin"/>
    <property type="match status" value="1"/>
</dbReference>
<dbReference type="Gene3D" id="2.40.100.10">
    <property type="entry name" value="Cyclophilin-like"/>
    <property type="match status" value="1"/>
</dbReference>
<dbReference type="InterPro" id="IPR029000">
    <property type="entry name" value="Cyclophilin-like_dom_sf"/>
</dbReference>
<dbReference type="InterPro" id="IPR020892">
    <property type="entry name" value="Cyclophilin-type_PPIase_CS"/>
</dbReference>
<dbReference type="InterPro" id="IPR002130">
    <property type="entry name" value="Cyclophilin-type_PPIase_dom"/>
</dbReference>
<dbReference type="InterPro" id="IPR044666">
    <property type="entry name" value="Cyclophilin_A-like"/>
</dbReference>
<dbReference type="PANTHER" id="PTHR45625">
    <property type="entry name" value="PEPTIDYL-PROLYL CIS-TRANS ISOMERASE-RELATED"/>
    <property type="match status" value="1"/>
</dbReference>
<dbReference type="PANTHER" id="PTHR45625:SF4">
    <property type="entry name" value="PEPTIDYLPROLYL ISOMERASE DOMAIN AND WD REPEAT-CONTAINING PROTEIN 1"/>
    <property type="match status" value="1"/>
</dbReference>
<dbReference type="Pfam" id="PF00160">
    <property type="entry name" value="Pro_isomerase"/>
    <property type="match status" value="1"/>
</dbReference>
<dbReference type="PRINTS" id="PR00153">
    <property type="entry name" value="CSAPPISMRASE"/>
</dbReference>
<dbReference type="SUPFAM" id="SSF50891">
    <property type="entry name" value="Cyclophilin-like"/>
    <property type="match status" value="1"/>
</dbReference>
<dbReference type="PROSITE" id="PS00170">
    <property type="entry name" value="CSA_PPIASE_1"/>
    <property type="match status" value="1"/>
</dbReference>
<dbReference type="PROSITE" id="PS50072">
    <property type="entry name" value="CSA_PPIASE_2"/>
    <property type="match status" value="1"/>
</dbReference>